<accession>Q90YS3</accession>
<evidence type="ECO:0000250" key="1">
    <source>
        <dbReference type="UniProtKB" id="P15880"/>
    </source>
</evidence>
<evidence type="ECO:0000250" key="2">
    <source>
        <dbReference type="UniProtKB" id="P25443"/>
    </source>
</evidence>
<evidence type="ECO:0000250" key="3">
    <source>
        <dbReference type="UniProtKB" id="P25444"/>
    </source>
</evidence>
<evidence type="ECO:0000255" key="4">
    <source>
        <dbReference type="PROSITE-ProRule" id="PRU00268"/>
    </source>
</evidence>
<evidence type="ECO:0000256" key="5">
    <source>
        <dbReference type="SAM" id="MobiDB-lite"/>
    </source>
</evidence>
<evidence type="ECO:0000305" key="6"/>
<gene>
    <name type="primary">rps2</name>
</gene>
<dbReference type="EMBL" id="AF402809">
    <property type="protein sequence ID" value="AAK95183.1"/>
    <property type="molecule type" value="mRNA"/>
</dbReference>
<dbReference type="RefSeq" id="NP_001187067.1">
    <property type="nucleotide sequence ID" value="NM_001200138.1"/>
</dbReference>
<dbReference type="SMR" id="Q90YS3"/>
<dbReference type="GeneID" id="100304556"/>
<dbReference type="KEGG" id="ipu:100304556"/>
<dbReference type="CTD" id="6187"/>
<dbReference type="OrthoDB" id="10253125at2759"/>
<dbReference type="Proteomes" id="UP000221080">
    <property type="component" value="Chromosome 2"/>
</dbReference>
<dbReference type="GO" id="GO:0022627">
    <property type="term" value="C:cytosolic small ribosomal subunit"/>
    <property type="evidence" value="ECO:0007669"/>
    <property type="project" value="TreeGrafter"/>
</dbReference>
<dbReference type="GO" id="GO:0005730">
    <property type="term" value="C:nucleolus"/>
    <property type="evidence" value="ECO:0007669"/>
    <property type="project" value="UniProtKB-SubCell"/>
</dbReference>
<dbReference type="GO" id="GO:0003723">
    <property type="term" value="F:RNA binding"/>
    <property type="evidence" value="ECO:0007669"/>
    <property type="project" value="InterPro"/>
</dbReference>
<dbReference type="GO" id="GO:0003735">
    <property type="term" value="F:structural constituent of ribosome"/>
    <property type="evidence" value="ECO:0007669"/>
    <property type="project" value="InterPro"/>
</dbReference>
<dbReference type="GO" id="GO:0006412">
    <property type="term" value="P:translation"/>
    <property type="evidence" value="ECO:0007669"/>
    <property type="project" value="InterPro"/>
</dbReference>
<dbReference type="FunFam" id="3.30.160.20:FF:000133">
    <property type="entry name" value="40S ribosomal protein S2"/>
    <property type="match status" value="1"/>
</dbReference>
<dbReference type="FunFam" id="3.30.230.10:FF:000004">
    <property type="entry name" value="40S ribosomal protein S2"/>
    <property type="match status" value="1"/>
</dbReference>
<dbReference type="Gene3D" id="3.30.160.20">
    <property type="match status" value="1"/>
</dbReference>
<dbReference type="Gene3D" id="3.30.230.10">
    <property type="match status" value="1"/>
</dbReference>
<dbReference type="InterPro" id="IPR020568">
    <property type="entry name" value="Ribosomal_Su5_D2-typ_SF"/>
</dbReference>
<dbReference type="InterPro" id="IPR000851">
    <property type="entry name" value="Ribosomal_uS5"/>
</dbReference>
<dbReference type="InterPro" id="IPR005324">
    <property type="entry name" value="Ribosomal_uS5_C"/>
</dbReference>
<dbReference type="InterPro" id="IPR005711">
    <property type="entry name" value="Ribosomal_uS5_euk/arc"/>
</dbReference>
<dbReference type="InterPro" id="IPR013810">
    <property type="entry name" value="Ribosomal_uS5_N"/>
</dbReference>
<dbReference type="InterPro" id="IPR018192">
    <property type="entry name" value="Ribosomal_uS5_N_CS"/>
</dbReference>
<dbReference type="InterPro" id="IPR014721">
    <property type="entry name" value="Ribsml_uS5_D2-typ_fold_subgr"/>
</dbReference>
<dbReference type="NCBIfam" id="TIGR01020">
    <property type="entry name" value="uS5_euk_arch"/>
    <property type="match status" value="1"/>
</dbReference>
<dbReference type="PANTHER" id="PTHR13718:SF4">
    <property type="entry name" value="40S RIBOSOMAL PROTEIN S2"/>
    <property type="match status" value="1"/>
</dbReference>
<dbReference type="PANTHER" id="PTHR13718">
    <property type="entry name" value="RIBOSOMAL S SUBUNIT"/>
    <property type="match status" value="1"/>
</dbReference>
<dbReference type="Pfam" id="PF00333">
    <property type="entry name" value="Ribosomal_S5"/>
    <property type="match status" value="1"/>
</dbReference>
<dbReference type="Pfam" id="PF03719">
    <property type="entry name" value="Ribosomal_S5_C"/>
    <property type="match status" value="1"/>
</dbReference>
<dbReference type="SUPFAM" id="SSF54768">
    <property type="entry name" value="dsRNA-binding domain-like"/>
    <property type="match status" value="1"/>
</dbReference>
<dbReference type="SUPFAM" id="SSF54211">
    <property type="entry name" value="Ribosomal protein S5 domain 2-like"/>
    <property type="match status" value="1"/>
</dbReference>
<dbReference type="PROSITE" id="PS00585">
    <property type="entry name" value="RIBOSOMAL_S5"/>
    <property type="match status" value="1"/>
</dbReference>
<dbReference type="PROSITE" id="PS50881">
    <property type="entry name" value="S5_DSRBD"/>
    <property type="match status" value="1"/>
</dbReference>
<keyword id="KW-0963">Cytoplasm</keyword>
<keyword id="KW-0539">Nucleus</keyword>
<keyword id="KW-0687">Ribonucleoprotein</keyword>
<keyword id="KW-0689">Ribosomal protein</keyword>
<proteinExistence type="evidence at transcript level"/>
<reference key="1">
    <citation type="journal article" date="2002" name="Gene">
        <title>Translational machinery of channel catfish: I. A transcriptomic approach to the analysis of 32 40S ribosomal protein genes and their expression.</title>
        <authorList>
            <person name="Karsi A."/>
            <person name="Patterson A."/>
            <person name="Feng J."/>
            <person name="Liu Z.-J."/>
        </authorList>
    </citation>
    <scope>NUCLEOTIDE SEQUENCE [MRNA]</scope>
</reference>
<sequence length="277" mass="30408">MADDAVVEEGSVEVSALAAGRPSWSWQRPGERARTPGRKAEDKEWVPVTKLGRLVKDMKIKSLEEIYLYSLPIKESEIIDFFLGSALKDEVLKIMPVQKQTRAGQRTRFKAFVAIGDYNGHVGLGVKCSKEVATAIRGAIILAKLSIIPVRRGYWGNKIGKPHTVPCKVTGRCGSVLVRLIPAPRGTGIVSAPVPKKLLMMAGIDDCYTSARGCTATLGNFAKATFDAISKTYSYLTPDLWKETVFTKSPYQEFTDHLAKTHTRVSVQRTQAAVQPS</sequence>
<name>RS2_ICTPU</name>
<protein>
    <recommendedName>
        <fullName evidence="6">Small ribosomal subunit protein uS5</fullName>
    </recommendedName>
    <alternativeName>
        <fullName>40S ribosomal protein S2</fullName>
    </alternativeName>
</protein>
<organism>
    <name type="scientific">Ictalurus punctatus</name>
    <name type="common">Channel catfish</name>
    <name type="synonym">Silurus punctatus</name>
    <dbReference type="NCBI Taxonomy" id="7998"/>
    <lineage>
        <taxon>Eukaryota</taxon>
        <taxon>Metazoa</taxon>
        <taxon>Chordata</taxon>
        <taxon>Craniata</taxon>
        <taxon>Vertebrata</taxon>
        <taxon>Euteleostomi</taxon>
        <taxon>Actinopterygii</taxon>
        <taxon>Neopterygii</taxon>
        <taxon>Teleostei</taxon>
        <taxon>Ostariophysi</taxon>
        <taxon>Siluriformes</taxon>
        <taxon>Ictaluridae</taxon>
        <taxon>Ictalurus</taxon>
    </lineage>
</organism>
<comment type="function">
    <text evidence="2 3">Component of the ribosome, a large ribonucleoprotein complex responsible for the synthesis of proteins in the cell. The small ribosomal subunit (SSU) binds messenger RNAs (mRNAs) and translates the encoded message by selecting cognate aminoacyl-transfer RNA (tRNA) molecules. The large subunit (LSU) contains the ribosomal catalytic site termed the peptidyl transferase center (PTC), which catalyzes the formation of peptide bonds, thereby polymerizing the amino acids delivered by tRNAs into a polypeptide chain. The nascent polypeptides leave the ribosome through a tunnel in the LSU and interact with protein factors that function in enzymatic processing, targeting, and the membrane insertion of nascent chains at the exit of the ribosomal tunnel (By similarity). Plays a role in the assembly and function of the 40S ribosomal subunit. Mutations in this protein affects the control of translational fidelity. Involved in nucleolar processing of pre-18S ribosomal RNA and ribosome assembly (By similarity).</text>
</comment>
<comment type="subunit">
    <text evidence="3">Component of the small ribosomal subunit.</text>
</comment>
<comment type="subcellular location">
    <subcellularLocation>
        <location evidence="3">Cytoplasm</location>
    </subcellularLocation>
    <subcellularLocation>
        <location evidence="1">Nucleus</location>
        <location evidence="1">Nucleolus</location>
    </subcellularLocation>
</comment>
<comment type="similarity">
    <text evidence="6">Belongs to the universal ribosomal protein uS5 family.</text>
</comment>
<feature type="chain" id="PRO_0000131676" description="Small ribosomal subunit protein uS5">
    <location>
        <begin position="1"/>
        <end position="277"/>
    </location>
</feature>
<feature type="domain" description="S5 DRBM" evidence="4">
    <location>
        <begin position="87"/>
        <end position="150"/>
    </location>
</feature>
<feature type="region of interest" description="Disordered" evidence="5">
    <location>
        <begin position="18"/>
        <end position="40"/>
    </location>
</feature>
<feature type="compositionally biased region" description="Basic and acidic residues" evidence="5">
    <location>
        <begin position="29"/>
        <end position="40"/>
    </location>
</feature>